<gene>
    <name type="primary">CCSER1</name>
    <name type="synonym">FAM190A</name>
</gene>
<accession>Q1RMS0</accession>
<reference key="1">
    <citation type="submission" date="2006-04" db="EMBL/GenBank/DDBJ databases">
        <authorList>
            <consortium name="NIH - Mammalian Gene Collection (MGC) project"/>
        </authorList>
    </citation>
    <scope>NUCLEOTIDE SEQUENCE [LARGE SCALE MRNA]</scope>
    <source>
        <strain>Hereford</strain>
        <tissue>Uterus</tissue>
    </source>
</reference>
<dbReference type="EMBL" id="BC114744">
    <property type="protein sequence ID" value="AAI14745.1"/>
    <property type="molecule type" value="mRNA"/>
</dbReference>
<dbReference type="RefSeq" id="NP_001069905.1">
    <property type="nucleotide sequence ID" value="NM_001076437.1"/>
</dbReference>
<dbReference type="SMR" id="Q1RMS0"/>
<dbReference type="FunCoup" id="Q1RMS0">
    <property type="interactions" value="479"/>
</dbReference>
<dbReference type="STRING" id="9913.ENSBTAP00000060868"/>
<dbReference type="PaxDb" id="9913-ENSBTAP00000026390"/>
<dbReference type="GeneID" id="616908"/>
<dbReference type="KEGG" id="bta:616908"/>
<dbReference type="CTD" id="401145"/>
<dbReference type="eggNOG" id="ENOG502QXW4">
    <property type="taxonomic scope" value="Eukaryota"/>
</dbReference>
<dbReference type="InParanoid" id="Q1RMS0"/>
<dbReference type="OrthoDB" id="10046062at2759"/>
<dbReference type="Proteomes" id="UP000009136">
    <property type="component" value="Unplaced"/>
</dbReference>
<dbReference type="InterPro" id="IPR029627">
    <property type="entry name" value="CCSER"/>
</dbReference>
<dbReference type="PANTHER" id="PTHR22461:SF1">
    <property type="entry name" value="SERINE-RICH COILED-COIL DOMAIN-CONTAINING PROTEIN 1"/>
    <property type="match status" value="1"/>
</dbReference>
<dbReference type="PANTHER" id="PTHR22461">
    <property type="entry name" value="SERINE-RICH COILED-COIL DOMAIN-CONTAINING PROTEIN 2-RELATED"/>
    <property type="match status" value="1"/>
</dbReference>
<organism>
    <name type="scientific">Bos taurus</name>
    <name type="common">Bovine</name>
    <dbReference type="NCBI Taxonomy" id="9913"/>
    <lineage>
        <taxon>Eukaryota</taxon>
        <taxon>Metazoa</taxon>
        <taxon>Chordata</taxon>
        <taxon>Craniata</taxon>
        <taxon>Vertebrata</taxon>
        <taxon>Euteleostomi</taxon>
        <taxon>Mammalia</taxon>
        <taxon>Eutheria</taxon>
        <taxon>Laurasiatheria</taxon>
        <taxon>Artiodactyla</taxon>
        <taxon>Ruminantia</taxon>
        <taxon>Pecora</taxon>
        <taxon>Bovidae</taxon>
        <taxon>Bovinae</taxon>
        <taxon>Bos</taxon>
    </lineage>
</organism>
<feature type="chain" id="PRO_0000349291" description="Serine-rich coiled-coil domain-containing protein 1">
    <location>
        <begin position="1"/>
        <end position="743"/>
    </location>
</feature>
<feature type="region of interest" description="Disordered" evidence="2">
    <location>
        <begin position="1"/>
        <end position="125"/>
    </location>
</feature>
<feature type="region of interest" description="Disordered" evidence="2">
    <location>
        <begin position="156"/>
        <end position="175"/>
    </location>
</feature>
<feature type="coiled-coil region" evidence="1">
    <location>
        <begin position="672"/>
        <end position="713"/>
    </location>
</feature>
<feature type="compositionally biased region" description="Low complexity" evidence="2">
    <location>
        <begin position="29"/>
        <end position="56"/>
    </location>
</feature>
<feature type="compositionally biased region" description="Polar residues" evidence="2">
    <location>
        <begin position="81"/>
        <end position="102"/>
    </location>
</feature>
<name>CCSE1_BOVIN</name>
<keyword id="KW-0175">Coiled coil</keyword>
<keyword id="KW-1185">Reference proteome</keyword>
<comment type="similarity">
    <text evidence="3">Belongs to the CCSER family.</text>
</comment>
<protein>
    <recommendedName>
        <fullName>Serine-rich coiled-coil domain-containing protein 1</fullName>
    </recommendedName>
    <alternativeName>
        <fullName>Coiled-coil serine-rich protein 1</fullName>
    </alternativeName>
</protein>
<sequence length="743" mass="81836">MGDSGSRRSTLVSRLPIFRRSISRKHDSLPSSPSSSNTVGVHSSSPSSTNSSSGSTGKRRSLFRTPSISFHHKKGSEPKQEPTNQNLSISNGAQPGQSSMQKLSLEEHTKARGRHSVGFSSSRNKKITRSLTEDFEREKEHSTNKNVFINCLSSGKSEGDDSGFTEEQTRRSVKQSTKKLLTKSFSSHYKLSKPVPQSQSISLVQQSEFSLEITQYQEREPVLVRGSPSCSVDVTERAGSSLQSPLLSADLTTAQTPSEFLALTEDSVSETDAFPKSGSMASHCDNLGHNDSTSQISPNPAAVTKTTRDLRGTVPCAIVSPGKYRLEGRCSTESNSLPETSAAYQKEVLLQITKLPVMNGSDSETHPSTDTREDHIVIQNGETMLATSSPRKFGFYEHHKAIAERVKGIHPISDSRIIPSSGDHHVLNKTSYGYDANPAKVLASSLSPYREGRFIERRLRSSSEGTAGSSRMILKPKDGNVEEVNSLRKQRASSSSSKMNSMDVLNNLGSCELDEDDLMLDLEFLEEQNLHPSVCREDSYHSVVSCAAVVLTPMEPTVEMKKREELKFREPSKQNLSLKLAKDIDQEARCSHIRGVPSSPSSDWPLPSVEENGGIDSLPFRLMLQDCTAVKTLLLKMKRVLQESADMSPASSTTSLPVSPLAEEPLPFKDIMKDECSMLKLQLKEKDELISQLQEELEKVQHLQKAFASRVDKSTQTELLGYDALWNPTCTEGLFKPVHNIST</sequence>
<proteinExistence type="evidence at transcript level"/>
<evidence type="ECO:0000255" key="1"/>
<evidence type="ECO:0000256" key="2">
    <source>
        <dbReference type="SAM" id="MobiDB-lite"/>
    </source>
</evidence>
<evidence type="ECO:0000305" key="3"/>